<keyword id="KW-0963">Cytoplasm</keyword>
<keyword id="KW-0255">Endonuclease</keyword>
<keyword id="KW-0378">Hydrolase</keyword>
<keyword id="KW-0464">Manganese</keyword>
<keyword id="KW-0479">Metal-binding</keyword>
<keyword id="KW-0540">Nuclease</keyword>
<evidence type="ECO:0000255" key="1">
    <source>
        <dbReference type="HAMAP-Rule" id="MF_00052"/>
    </source>
</evidence>
<evidence type="ECO:0000255" key="2">
    <source>
        <dbReference type="PROSITE-ProRule" id="PRU01319"/>
    </source>
</evidence>
<sequence>MATIKEIKEFLVTVKELESPIFLELEKDNRSGVQKEISKRKRAIQAELDENLRLESMLSYEKELYKQGLTLIVGIDEVGRGPLAGPVVAAAVILPKNCKIKGLNDSKKIPKKKHLEIFQAVQDQALSIGIGIIDNQVIDQVNIYEATKLAMQEAISQLSPQPEHLLIDAMKLDLPISQTSIIKGDANSLSIAAASIVAKVTRDELMKEYDQQFPGYDFATNAGYGTAKHLEGLTKLGVTPIHRTSFEPVKSLVLGKKES</sequence>
<organism>
    <name type="scientific">Streptococcus pneumoniae (strain ATCC 700669 / Spain 23F-1)</name>
    <dbReference type="NCBI Taxonomy" id="561276"/>
    <lineage>
        <taxon>Bacteria</taxon>
        <taxon>Bacillati</taxon>
        <taxon>Bacillota</taxon>
        <taxon>Bacilli</taxon>
        <taxon>Lactobacillales</taxon>
        <taxon>Streptococcaceae</taxon>
        <taxon>Streptococcus</taxon>
    </lineage>
</organism>
<accession>B8ZQ37</accession>
<dbReference type="EC" id="3.1.26.4" evidence="1"/>
<dbReference type="EMBL" id="FM211187">
    <property type="protein sequence ID" value="CAR68876.1"/>
    <property type="molecule type" value="Genomic_DNA"/>
</dbReference>
<dbReference type="RefSeq" id="WP_000201099.1">
    <property type="nucleotide sequence ID" value="NC_011900.1"/>
</dbReference>
<dbReference type="SMR" id="B8ZQ37"/>
<dbReference type="KEGG" id="sne:SPN23F10610"/>
<dbReference type="HOGENOM" id="CLU_036532_2_1_9"/>
<dbReference type="GO" id="GO:0005737">
    <property type="term" value="C:cytoplasm"/>
    <property type="evidence" value="ECO:0007669"/>
    <property type="project" value="UniProtKB-SubCell"/>
</dbReference>
<dbReference type="GO" id="GO:0032299">
    <property type="term" value="C:ribonuclease H2 complex"/>
    <property type="evidence" value="ECO:0007669"/>
    <property type="project" value="TreeGrafter"/>
</dbReference>
<dbReference type="GO" id="GO:0030145">
    <property type="term" value="F:manganese ion binding"/>
    <property type="evidence" value="ECO:0007669"/>
    <property type="project" value="UniProtKB-UniRule"/>
</dbReference>
<dbReference type="GO" id="GO:0003723">
    <property type="term" value="F:RNA binding"/>
    <property type="evidence" value="ECO:0007669"/>
    <property type="project" value="InterPro"/>
</dbReference>
<dbReference type="GO" id="GO:0004523">
    <property type="term" value="F:RNA-DNA hybrid ribonuclease activity"/>
    <property type="evidence" value="ECO:0007669"/>
    <property type="project" value="UniProtKB-UniRule"/>
</dbReference>
<dbReference type="GO" id="GO:0043137">
    <property type="term" value="P:DNA replication, removal of RNA primer"/>
    <property type="evidence" value="ECO:0007669"/>
    <property type="project" value="TreeGrafter"/>
</dbReference>
<dbReference type="GO" id="GO:0006298">
    <property type="term" value="P:mismatch repair"/>
    <property type="evidence" value="ECO:0007669"/>
    <property type="project" value="TreeGrafter"/>
</dbReference>
<dbReference type="CDD" id="cd07182">
    <property type="entry name" value="RNase_HII_bacteria_HII_like"/>
    <property type="match status" value="1"/>
</dbReference>
<dbReference type="FunFam" id="3.30.420.10:FF:000006">
    <property type="entry name" value="Ribonuclease HII"/>
    <property type="match status" value="1"/>
</dbReference>
<dbReference type="Gene3D" id="3.30.420.10">
    <property type="entry name" value="Ribonuclease H-like superfamily/Ribonuclease H"/>
    <property type="match status" value="1"/>
</dbReference>
<dbReference type="HAMAP" id="MF_00052_B">
    <property type="entry name" value="RNase_HII_B"/>
    <property type="match status" value="1"/>
</dbReference>
<dbReference type="InterPro" id="IPR022898">
    <property type="entry name" value="RNase_HII"/>
</dbReference>
<dbReference type="InterPro" id="IPR001352">
    <property type="entry name" value="RNase_HII/HIII"/>
</dbReference>
<dbReference type="InterPro" id="IPR024567">
    <property type="entry name" value="RNase_HII/HIII_dom"/>
</dbReference>
<dbReference type="InterPro" id="IPR012337">
    <property type="entry name" value="RNaseH-like_sf"/>
</dbReference>
<dbReference type="InterPro" id="IPR036397">
    <property type="entry name" value="RNaseH_sf"/>
</dbReference>
<dbReference type="NCBIfam" id="NF000594">
    <property type="entry name" value="PRK00015.1-1"/>
    <property type="match status" value="1"/>
</dbReference>
<dbReference type="NCBIfam" id="NF000595">
    <property type="entry name" value="PRK00015.1-3"/>
    <property type="match status" value="1"/>
</dbReference>
<dbReference type="PANTHER" id="PTHR10954">
    <property type="entry name" value="RIBONUCLEASE H2 SUBUNIT A"/>
    <property type="match status" value="1"/>
</dbReference>
<dbReference type="PANTHER" id="PTHR10954:SF18">
    <property type="entry name" value="RIBONUCLEASE HII"/>
    <property type="match status" value="1"/>
</dbReference>
<dbReference type="Pfam" id="PF01351">
    <property type="entry name" value="RNase_HII"/>
    <property type="match status" value="1"/>
</dbReference>
<dbReference type="SUPFAM" id="SSF53098">
    <property type="entry name" value="Ribonuclease H-like"/>
    <property type="match status" value="1"/>
</dbReference>
<dbReference type="PROSITE" id="PS51975">
    <property type="entry name" value="RNASE_H_2"/>
    <property type="match status" value="1"/>
</dbReference>
<comment type="function">
    <text evidence="1">Endonuclease that specifically degrades the RNA of RNA-DNA hybrids.</text>
</comment>
<comment type="catalytic activity">
    <reaction evidence="1">
        <text>Endonucleolytic cleavage to 5'-phosphomonoester.</text>
        <dbReference type="EC" id="3.1.26.4"/>
    </reaction>
</comment>
<comment type="cofactor">
    <cofactor evidence="1">
        <name>Mn(2+)</name>
        <dbReference type="ChEBI" id="CHEBI:29035"/>
    </cofactor>
    <cofactor evidence="1">
        <name>Mg(2+)</name>
        <dbReference type="ChEBI" id="CHEBI:18420"/>
    </cofactor>
    <text evidence="1">Manganese or magnesium. Binds 1 divalent metal ion per monomer in the absence of substrate. May bind a second metal ion after substrate binding.</text>
</comment>
<comment type="subcellular location">
    <subcellularLocation>
        <location evidence="1">Cytoplasm</location>
    </subcellularLocation>
</comment>
<comment type="similarity">
    <text evidence="1">Belongs to the RNase HII family.</text>
</comment>
<name>RNH2_STRPJ</name>
<proteinExistence type="inferred from homology"/>
<reference key="1">
    <citation type="journal article" date="2009" name="J. Bacteriol.">
        <title>Role of conjugative elements in the evolution of the multidrug-resistant pandemic clone Streptococcus pneumoniae Spain23F ST81.</title>
        <authorList>
            <person name="Croucher N.J."/>
            <person name="Walker D."/>
            <person name="Romero P."/>
            <person name="Lennard N."/>
            <person name="Paterson G.K."/>
            <person name="Bason N.C."/>
            <person name="Mitchell A.M."/>
            <person name="Quail M.A."/>
            <person name="Andrew P.W."/>
            <person name="Parkhill J."/>
            <person name="Bentley S.D."/>
            <person name="Mitchell T.J."/>
        </authorList>
    </citation>
    <scope>NUCLEOTIDE SEQUENCE [LARGE SCALE GENOMIC DNA]</scope>
    <source>
        <strain>ATCC 700669 / Spain 23F-1</strain>
    </source>
</reference>
<gene>
    <name evidence="1" type="primary">rnhB</name>
    <name type="ordered locus">SPN23F10610</name>
</gene>
<feature type="chain" id="PRO_1000117687" description="Ribonuclease HII">
    <location>
        <begin position="1"/>
        <end position="259"/>
    </location>
</feature>
<feature type="domain" description="RNase H type-2" evidence="2">
    <location>
        <begin position="70"/>
        <end position="258"/>
    </location>
</feature>
<feature type="binding site" evidence="1">
    <location>
        <position position="76"/>
    </location>
    <ligand>
        <name>a divalent metal cation</name>
        <dbReference type="ChEBI" id="CHEBI:60240"/>
    </ligand>
</feature>
<feature type="binding site" evidence="1">
    <location>
        <position position="77"/>
    </location>
    <ligand>
        <name>a divalent metal cation</name>
        <dbReference type="ChEBI" id="CHEBI:60240"/>
    </ligand>
</feature>
<feature type="binding site" evidence="1">
    <location>
        <position position="168"/>
    </location>
    <ligand>
        <name>a divalent metal cation</name>
        <dbReference type="ChEBI" id="CHEBI:60240"/>
    </ligand>
</feature>
<protein>
    <recommendedName>
        <fullName evidence="1">Ribonuclease HII</fullName>
        <shortName evidence="1">RNase HII</shortName>
        <ecNumber evidence="1">3.1.26.4</ecNumber>
    </recommendedName>
</protein>